<sequence>MERGPVVGAGRGAGARIRALLGGLVRVLLWVASALLYFGSEQAARLLGSPCLRRLYHAWLAAVVIFGPLLQFHVNPRTIFASHGNFFNIKFVNSAWGWTCTFLGGFVLLVVFLATRRVAVTARHLSRLVVGAAVWRGAGRAFLLIEDLTGSCFEPLPQGLLLHELPDRRSCLAAGHQWRGYTVSSHTFLLTFCCLLMAEEAAVFAKYLAHGLPAGAPLRLVFLLNVLLLGLWNFLLLCTVIYFHQYTHKVVGAAVGTFAWYLTYGSWYHQPWSPGSPGHGLFPRPHSIHKHN</sequence>
<name>FITM1_BOVIN</name>
<dbReference type="EMBL" id="BC134663">
    <property type="protein sequence ID" value="AAI34664.1"/>
    <property type="molecule type" value="mRNA"/>
</dbReference>
<dbReference type="RefSeq" id="NP_001098821.1">
    <property type="nucleotide sequence ID" value="NM_001105351.2"/>
</dbReference>
<dbReference type="FunCoup" id="A7YWN2">
    <property type="interactions" value="48"/>
</dbReference>
<dbReference type="STRING" id="9913.ENSBTAP00000028518"/>
<dbReference type="PaxDb" id="9913-ENSBTAP00000028518"/>
<dbReference type="Ensembl" id="ENSBTAT00000028518.6">
    <property type="protein sequence ID" value="ENSBTAP00000028518.6"/>
    <property type="gene ID" value="ENSBTAG00000021394.6"/>
</dbReference>
<dbReference type="GeneID" id="510040"/>
<dbReference type="KEGG" id="bta:510040"/>
<dbReference type="CTD" id="161247"/>
<dbReference type="VGNC" id="VGNC:29015">
    <property type="gene designation" value="FITM1"/>
</dbReference>
<dbReference type="eggNOG" id="KOG3750">
    <property type="taxonomic scope" value="Eukaryota"/>
</dbReference>
<dbReference type="GeneTree" id="ENSGT00530000063693"/>
<dbReference type="HOGENOM" id="CLU_049499_2_0_1"/>
<dbReference type="InParanoid" id="A7YWN2"/>
<dbReference type="OrthoDB" id="5579088at2759"/>
<dbReference type="Proteomes" id="UP000009136">
    <property type="component" value="Chromosome 10"/>
</dbReference>
<dbReference type="GO" id="GO:0005789">
    <property type="term" value="C:endoplasmic reticulum membrane"/>
    <property type="evidence" value="ECO:0000318"/>
    <property type="project" value="GO_Central"/>
</dbReference>
<dbReference type="GO" id="GO:0010945">
    <property type="term" value="F:coenzyme A diphosphatase activity"/>
    <property type="evidence" value="ECO:0007669"/>
    <property type="project" value="InterPro"/>
</dbReference>
<dbReference type="GO" id="GO:0019992">
    <property type="term" value="F:diacylglycerol binding"/>
    <property type="evidence" value="ECO:0000250"/>
    <property type="project" value="UniProtKB"/>
</dbReference>
<dbReference type="GO" id="GO:0017129">
    <property type="term" value="F:triglyceride binding"/>
    <property type="evidence" value="ECO:0000250"/>
    <property type="project" value="UniProtKB"/>
</dbReference>
<dbReference type="GO" id="GO:0045444">
    <property type="term" value="P:fat cell differentiation"/>
    <property type="evidence" value="ECO:0007669"/>
    <property type="project" value="Ensembl"/>
</dbReference>
<dbReference type="GO" id="GO:0140042">
    <property type="term" value="P:lipid droplet formation"/>
    <property type="evidence" value="ECO:0000250"/>
    <property type="project" value="UniProtKB"/>
</dbReference>
<dbReference type="GO" id="GO:0034389">
    <property type="term" value="P:lipid droplet organization"/>
    <property type="evidence" value="ECO:0000318"/>
    <property type="project" value="GO_Central"/>
</dbReference>
<dbReference type="GO" id="GO:0019915">
    <property type="term" value="P:lipid storage"/>
    <property type="evidence" value="ECO:0000318"/>
    <property type="project" value="GO_Central"/>
</dbReference>
<dbReference type="GO" id="GO:0008654">
    <property type="term" value="P:phospholipid biosynthetic process"/>
    <property type="evidence" value="ECO:0000318"/>
    <property type="project" value="GO_Central"/>
</dbReference>
<dbReference type="HAMAP" id="MF_03229">
    <property type="entry name" value="FITM1"/>
    <property type="match status" value="1"/>
</dbReference>
<dbReference type="HAMAP" id="MF_03230">
    <property type="entry name" value="FITM2"/>
    <property type="match status" value="1"/>
</dbReference>
<dbReference type="InterPro" id="IPR019388">
    <property type="entry name" value="FIT"/>
</dbReference>
<dbReference type="InterPro" id="IPR046402">
    <property type="entry name" value="FIT1"/>
</dbReference>
<dbReference type="InterPro" id="IPR046401">
    <property type="entry name" value="FITM1/2"/>
</dbReference>
<dbReference type="PANTHER" id="PTHR23129">
    <property type="entry name" value="ACYL-COENZYME A DIPHOSPHATASE FITM2"/>
    <property type="match status" value="1"/>
</dbReference>
<dbReference type="PANTHER" id="PTHR23129:SF3">
    <property type="entry name" value="FAT STORAGE-INDUCING TRANSMEMBRANE PROTEIN 1"/>
    <property type="match status" value="1"/>
</dbReference>
<accession>A7YWN2</accession>
<keyword id="KW-0256">Endoplasmic reticulum</keyword>
<keyword id="KW-0443">Lipid metabolism</keyword>
<keyword id="KW-0472">Membrane</keyword>
<keyword id="KW-1185">Reference proteome</keyword>
<keyword id="KW-0812">Transmembrane</keyword>
<keyword id="KW-1133">Transmembrane helix</keyword>
<reference key="1">
    <citation type="submission" date="2007-03" db="EMBL/GenBank/DDBJ databases">
        <authorList>
            <consortium name="NIH - Mammalian Gene Collection (MGC) project"/>
        </authorList>
    </citation>
    <scope>NUCLEOTIDE SEQUENCE [LARGE SCALE MRNA]</scope>
    <source>
        <strain>Hereford</strain>
        <tissue>Uterus</tissue>
    </source>
</reference>
<gene>
    <name evidence="3" type="primary">FITM1</name>
    <name evidence="3" type="synonym">FIT1</name>
</gene>
<proteinExistence type="evidence at transcript level"/>
<comment type="function">
    <text evidence="3">Plays an important role in the formation of lipid droplets (LDs) which are storage organelles at the center of lipid and energy homeostasis (By similarity). Directly binds to diacylglycerol (DAGs) and triacylglycerol (By similarity).</text>
</comment>
<comment type="subcellular location">
    <subcellularLocation>
        <location evidence="3">Endoplasmic reticulum membrane</location>
        <topology evidence="3">Multi-pass membrane protein</topology>
    </subcellularLocation>
</comment>
<comment type="similarity">
    <text evidence="3">Belongs to the FIT family. FIT1 subfamily.</text>
</comment>
<evidence type="ECO:0000250" key="1">
    <source>
        <dbReference type="UniProtKB" id="A5D6W6"/>
    </source>
</evidence>
<evidence type="ECO:0000255" key="2"/>
<evidence type="ECO:0000255" key="3">
    <source>
        <dbReference type="HAMAP-Rule" id="MF_03229"/>
    </source>
</evidence>
<evidence type="ECO:0000305" key="4"/>
<organism>
    <name type="scientific">Bos taurus</name>
    <name type="common">Bovine</name>
    <dbReference type="NCBI Taxonomy" id="9913"/>
    <lineage>
        <taxon>Eukaryota</taxon>
        <taxon>Metazoa</taxon>
        <taxon>Chordata</taxon>
        <taxon>Craniata</taxon>
        <taxon>Vertebrata</taxon>
        <taxon>Euteleostomi</taxon>
        <taxon>Mammalia</taxon>
        <taxon>Eutheria</taxon>
        <taxon>Laurasiatheria</taxon>
        <taxon>Artiodactyla</taxon>
        <taxon>Ruminantia</taxon>
        <taxon>Pecora</taxon>
        <taxon>Bovidae</taxon>
        <taxon>Bovinae</taxon>
        <taxon>Bos</taxon>
    </lineage>
</organism>
<protein>
    <recommendedName>
        <fullName evidence="1">Fat storage-inducing transmembrane protein 1</fullName>
    </recommendedName>
    <alternativeName>
        <fullName evidence="3">Fat-inducing protein 1</fullName>
    </alternativeName>
</protein>
<feature type="chain" id="PRO_0000319574" description="Fat storage-inducing transmembrane protein 1">
    <location>
        <begin position="1"/>
        <end position="292"/>
    </location>
</feature>
<feature type="topological domain" description="Lumenal" evidence="4">
    <location>
        <begin position="1"/>
        <end position="18"/>
    </location>
</feature>
<feature type="transmembrane region" description="Helical" evidence="2">
    <location>
        <begin position="19"/>
        <end position="39"/>
    </location>
</feature>
<feature type="topological domain" description="Cytoplasmic" evidence="4">
    <location>
        <begin position="40"/>
        <end position="54"/>
    </location>
</feature>
<feature type="transmembrane region" description="Helical" evidence="2">
    <location>
        <begin position="55"/>
        <end position="75"/>
    </location>
</feature>
<feature type="topological domain" description="Lumenal" evidence="4">
    <location>
        <begin position="76"/>
        <end position="94"/>
    </location>
</feature>
<feature type="transmembrane region" description="Helical" evidence="2">
    <location>
        <begin position="95"/>
        <end position="115"/>
    </location>
</feature>
<feature type="topological domain" description="Cytoplasmic" evidence="4">
    <location>
        <begin position="116"/>
        <end position="141"/>
    </location>
</feature>
<feature type="transmembrane region" description="Helical" evidence="2">
    <location>
        <begin position="142"/>
        <end position="162"/>
    </location>
</feature>
<feature type="topological domain" description="Lumenal" evidence="4">
    <location>
        <begin position="163"/>
        <end position="187"/>
    </location>
</feature>
<feature type="transmembrane region" description="Helical" evidence="2">
    <location>
        <begin position="188"/>
        <end position="208"/>
    </location>
</feature>
<feature type="topological domain" description="Cytoplasmic" evidence="4">
    <location>
        <begin position="209"/>
        <end position="220"/>
    </location>
</feature>
<feature type="transmembrane region" description="Helical" evidence="2">
    <location>
        <begin position="221"/>
        <end position="241"/>
    </location>
</feature>
<feature type="topological domain" description="Lumenal" evidence="4">
    <location>
        <begin position="242"/>
        <end position="249"/>
    </location>
</feature>
<feature type="transmembrane region" description="Helical" evidence="2">
    <location>
        <begin position="250"/>
        <end position="270"/>
    </location>
</feature>
<feature type="topological domain" description="Cytoplasmic" evidence="4">
    <location>
        <begin position="271"/>
        <end position="292"/>
    </location>
</feature>
<feature type="active site" evidence="3">
    <location>
        <position position="186"/>
    </location>
</feature>
<feature type="active site" evidence="3">
    <location>
        <position position="244"/>
    </location>
</feature>
<feature type="site" description="Important for catalytic activity" evidence="3">
    <location>
        <position position="248"/>
    </location>
</feature>